<organism>
    <name type="scientific">Bacillus subtilis (strain 168)</name>
    <dbReference type="NCBI Taxonomy" id="224308"/>
    <lineage>
        <taxon>Bacteria</taxon>
        <taxon>Bacillati</taxon>
        <taxon>Bacillota</taxon>
        <taxon>Bacilli</taxon>
        <taxon>Bacillales</taxon>
        <taxon>Bacillaceae</taxon>
        <taxon>Bacillus</taxon>
    </lineage>
</organism>
<dbReference type="EC" id="2.3.1.-" evidence="2"/>
<dbReference type="EMBL" id="D45912">
    <property type="protein sequence ID" value="BAA08328.1"/>
    <property type="molecule type" value="Genomic_DNA"/>
</dbReference>
<dbReference type="EMBL" id="AL009126">
    <property type="protein sequence ID" value="CAB15987.2"/>
    <property type="molecule type" value="Genomic_DNA"/>
</dbReference>
<dbReference type="PIR" id="F70075">
    <property type="entry name" value="F70075"/>
</dbReference>
<dbReference type="RefSeq" id="NP_391830.2">
    <property type="nucleotide sequence ID" value="NC_000964.3"/>
</dbReference>
<dbReference type="RefSeq" id="WP_003242734.1">
    <property type="nucleotide sequence ID" value="NZ_OZ025638.1"/>
</dbReference>
<dbReference type="SMR" id="P54951"/>
<dbReference type="FunCoup" id="P54951">
    <property type="interactions" value="17"/>
</dbReference>
<dbReference type="STRING" id="224308.BSU39510"/>
<dbReference type="PaxDb" id="224308-BSU39510"/>
<dbReference type="EnsemblBacteria" id="CAB15987">
    <property type="protein sequence ID" value="CAB15987"/>
    <property type="gene ID" value="BSU_39510"/>
</dbReference>
<dbReference type="GeneID" id="937563"/>
<dbReference type="KEGG" id="bsu:BSU39510"/>
<dbReference type="PATRIC" id="fig|224308.179.peg.4276"/>
<dbReference type="eggNOG" id="COG0456">
    <property type="taxonomic scope" value="Bacteria"/>
</dbReference>
<dbReference type="InParanoid" id="P54951"/>
<dbReference type="OrthoDB" id="8116329at2"/>
<dbReference type="PhylomeDB" id="P54951"/>
<dbReference type="BioCyc" id="BSUB:BSU39510-MONOMER"/>
<dbReference type="BioCyc" id="MetaCyc:BSU39510-MONOMER"/>
<dbReference type="UniPathway" id="UPA00136"/>
<dbReference type="Proteomes" id="UP000001570">
    <property type="component" value="Chromosome"/>
</dbReference>
<dbReference type="GO" id="GO:0016747">
    <property type="term" value="F:acyltransferase activity, transferring groups other than amino-acyl groups"/>
    <property type="evidence" value="ECO:0007669"/>
    <property type="project" value="InterPro"/>
</dbReference>
<dbReference type="GO" id="GO:0019344">
    <property type="term" value="P:cysteine biosynthetic process"/>
    <property type="evidence" value="ECO:0007669"/>
    <property type="project" value="UniProtKB-UniPathway"/>
</dbReference>
<dbReference type="CDD" id="cd04301">
    <property type="entry name" value="NAT_SF"/>
    <property type="match status" value="1"/>
</dbReference>
<dbReference type="Gene3D" id="3.40.630.30">
    <property type="match status" value="1"/>
</dbReference>
<dbReference type="InterPro" id="IPR016181">
    <property type="entry name" value="Acyl_CoA_acyltransferase"/>
</dbReference>
<dbReference type="InterPro" id="IPR000182">
    <property type="entry name" value="GNAT_dom"/>
</dbReference>
<dbReference type="PANTHER" id="PTHR43800">
    <property type="entry name" value="PEPTIDYL-LYSINE N-ACETYLTRANSFERASE YJAB"/>
    <property type="match status" value="1"/>
</dbReference>
<dbReference type="PANTHER" id="PTHR43800:SF1">
    <property type="entry name" value="PEPTIDYL-LYSINE N-ACETYLTRANSFERASE YJAB"/>
    <property type="match status" value="1"/>
</dbReference>
<dbReference type="Pfam" id="PF00583">
    <property type="entry name" value="Acetyltransf_1"/>
    <property type="match status" value="1"/>
</dbReference>
<dbReference type="SUPFAM" id="SSF55729">
    <property type="entry name" value="Acyl-CoA N-acyltransferases (Nat)"/>
    <property type="match status" value="1"/>
</dbReference>
<dbReference type="PROSITE" id="PS51186">
    <property type="entry name" value="GNAT"/>
    <property type="match status" value="1"/>
</dbReference>
<gene>
    <name evidence="3" type="primary">scmL</name>
    <name evidence="3" type="synonym">snaB</name>
    <name type="synonym">yxeL</name>
    <name type="ordered locus">BSU39510</name>
    <name type="ORF">LP9D</name>
</gene>
<evidence type="ECO:0000255" key="1">
    <source>
        <dbReference type="PROSITE-ProRule" id="PRU00532"/>
    </source>
</evidence>
<evidence type="ECO:0000269" key="2">
    <source>
    </source>
</evidence>
<evidence type="ECO:0000303" key="3">
    <source>
    </source>
</evidence>
<evidence type="ECO:0000305" key="4"/>
<evidence type="ECO:0000305" key="5">
    <source>
    </source>
</evidence>
<sequence length="165" mass="19125">MKPRYRLAVERDAEQLLELTLRAYEPIRKLGIRFAAAHADLDLVLKNIRENACYVMEEDGRIIATITLRMPWGKQPGPYGVPHIWWFAVDPDTGKKGIGTKLLQWLEETILRDTLKVPFVSLGTADKHPWLIEMYERKGYVRSGEQDLGKGHITVYMKKQLRHDL</sequence>
<keyword id="KW-0012">Acyltransferase</keyword>
<keyword id="KW-0028">Amino-acid biosynthesis</keyword>
<keyword id="KW-0198">Cysteine biosynthesis</keyword>
<keyword id="KW-1185">Reference proteome</keyword>
<keyword id="KW-0808">Transferase</keyword>
<comment type="function">
    <text evidence="2">Catalyzes the N-acetylation of S-(2-succino)cysteine. Is involved in a S-(2-succino)cysteine (2SC) degradation pathway that allows B.subtilis to grow on 2SC as a sole sulfur source, via its metabolization to cysteine. Moreover, 2SC is a toxic compound in B.subtilis at high exogenous concentrations, and this enzyme relieves 2SC toxicity via N-acetylation.</text>
</comment>
<comment type="catalytic activity">
    <reaction evidence="2">
        <text>S-(2-succino)-L-cysteine + acetyl-CoA = N-acetyl-S-(2-succino)-L-cysteine + CoA + H(+)</text>
        <dbReference type="Rhea" id="RHEA:61440"/>
        <dbReference type="ChEBI" id="CHEBI:15378"/>
        <dbReference type="ChEBI" id="CHEBI:57287"/>
        <dbReference type="ChEBI" id="CHEBI:57288"/>
        <dbReference type="ChEBI" id="CHEBI:143133"/>
        <dbReference type="ChEBI" id="CHEBI:144658"/>
    </reaction>
</comment>
<comment type="biophysicochemical properties">
    <kinetics>
        <KM evidence="2">86.4 uM for S-(2-succino)-L-cysteine</KM>
        <text evidence="2">kcat is 9.5 sec(-1).</text>
    </kinetics>
</comment>
<comment type="pathway">
    <text evidence="5">Amino-acid biosynthesis; L-cysteine biosynthesis.</text>
</comment>
<comment type="disruption phenotype">
    <text evidence="2">Cells lacking this gene almost lose the ability to grow on 2SC as the sulfur source but are still able to grow on sulfate. Moreover, in contrast to wild type, they highly accumulate 2SC when grown on fumarate as the sulfur source. Addition of 2SC causes growth inhibition of the deletion mutant but not the wild type grown on sulfate as the sulfur source.</text>
</comment>
<comment type="miscellaneous">
    <text evidence="5">Fumarate mediated succination of thiols increases in certain tumors and in response to glucotoxicity associated with diabetes. Therefore, S-(2-succino)-adducts such as S-(2-succino)cysteine (2SC) are considered oncometabolites and biomarkers for human disease. The demonstration of a metabolic disposal route for a S-(2-succino)-compound paves the way toward the identification of corresponding pathways in other species.</text>
</comment>
<comment type="similarity">
    <text evidence="4">Belongs to the acetyltransferase family.</text>
</comment>
<accession>P54951</accession>
<protein>
    <recommendedName>
        <fullName evidence="3">S-(2-succino)cysteine N-acetyltransferase</fullName>
        <shortName evidence="3">2SC N-acetyltransferase</shortName>
        <ecNumber evidence="2">2.3.1.-</ecNumber>
    </recommendedName>
    <alternativeName>
        <fullName evidence="3">S-(2-succino)cysteine metabolism operon protein L</fullName>
    </alternativeName>
</protein>
<name>SCML_BACSU</name>
<reference key="1">
    <citation type="journal article" date="1995" name="DNA Res.">
        <title>Cloning and sequencing of a 23-kb region of the Bacillus subtilis genome between the iol and hut operons.</title>
        <authorList>
            <person name="Yoshida K."/>
            <person name="Fujimyra M."/>
            <person name="Yanai N."/>
            <person name="Fujita Y."/>
        </authorList>
    </citation>
    <scope>NUCLEOTIDE SEQUENCE [GENOMIC DNA]</scope>
    <source>
        <strain>168 / BGSC1A1</strain>
    </source>
</reference>
<reference key="2">
    <citation type="journal article" date="1997" name="Nature">
        <title>The complete genome sequence of the Gram-positive bacterium Bacillus subtilis.</title>
        <authorList>
            <person name="Kunst F."/>
            <person name="Ogasawara N."/>
            <person name="Moszer I."/>
            <person name="Albertini A.M."/>
            <person name="Alloni G."/>
            <person name="Azevedo V."/>
            <person name="Bertero M.G."/>
            <person name="Bessieres P."/>
            <person name="Bolotin A."/>
            <person name="Borchert S."/>
            <person name="Borriss R."/>
            <person name="Boursier L."/>
            <person name="Brans A."/>
            <person name="Braun M."/>
            <person name="Brignell S.C."/>
            <person name="Bron S."/>
            <person name="Brouillet S."/>
            <person name="Bruschi C.V."/>
            <person name="Caldwell B."/>
            <person name="Capuano V."/>
            <person name="Carter N.M."/>
            <person name="Choi S.-K."/>
            <person name="Codani J.-J."/>
            <person name="Connerton I.F."/>
            <person name="Cummings N.J."/>
            <person name="Daniel R.A."/>
            <person name="Denizot F."/>
            <person name="Devine K.M."/>
            <person name="Duesterhoeft A."/>
            <person name="Ehrlich S.D."/>
            <person name="Emmerson P.T."/>
            <person name="Entian K.-D."/>
            <person name="Errington J."/>
            <person name="Fabret C."/>
            <person name="Ferrari E."/>
            <person name="Foulger D."/>
            <person name="Fritz C."/>
            <person name="Fujita M."/>
            <person name="Fujita Y."/>
            <person name="Fuma S."/>
            <person name="Galizzi A."/>
            <person name="Galleron N."/>
            <person name="Ghim S.-Y."/>
            <person name="Glaser P."/>
            <person name="Goffeau A."/>
            <person name="Golightly E.J."/>
            <person name="Grandi G."/>
            <person name="Guiseppi G."/>
            <person name="Guy B.J."/>
            <person name="Haga K."/>
            <person name="Haiech J."/>
            <person name="Harwood C.R."/>
            <person name="Henaut A."/>
            <person name="Hilbert H."/>
            <person name="Holsappel S."/>
            <person name="Hosono S."/>
            <person name="Hullo M.-F."/>
            <person name="Itaya M."/>
            <person name="Jones L.-M."/>
            <person name="Joris B."/>
            <person name="Karamata D."/>
            <person name="Kasahara Y."/>
            <person name="Klaerr-Blanchard M."/>
            <person name="Klein C."/>
            <person name="Kobayashi Y."/>
            <person name="Koetter P."/>
            <person name="Koningstein G."/>
            <person name="Krogh S."/>
            <person name="Kumano M."/>
            <person name="Kurita K."/>
            <person name="Lapidus A."/>
            <person name="Lardinois S."/>
            <person name="Lauber J."/>
            <person name="Lazarevic V."/>
            <person name="Lee S.-M."/>
            <person name="Levine A."/>
            <person name="Liu H."/>
            <person name="Masuda S."/>
            <person name="Mauel C."/>
            <person name="Medigue C."/>
            <person name="Medina N."/>
            <person name="Mellado R.P."/>
            <person name="Mizuno M."/>
            <person name="Moestl D."/>
            <person name="Nakai S."/>
            <person name="Noback M."/>
            <person name="Noone D."/>
            <person name="O'Reilly M."/>
            <person name="Ogawa K."/>
            <person name="Ogiwara A."/>
            <person name="Oudega B."/>
            <person name="Park S.-H."/>
            <person name="Parro V."/>
            <person name="Pohl T.M."/>
            <person name="Portetelle D."/>
            <person name="Porwollik S."/>
            <person name="Prescott A.M."/>
            <person name="Presecan E."/>
            <person name="Pujic P."/>
            <person name="Purnelle B."/>
            <person name="Rapoport G."/>
            <person name="Rey M."/>
            <person name="Reynolds S."/>
            <person name="Rieger M."/>
            <person name="Rivolta C."/>
            <person name="Rocha E."/>
            <person name="Roche B."/>
            <person name="Rose M."/>
            <person name="Sadaie Y."/>
            <person name="Sato T."/>
            <person name="Scanlan E."/>
            <person name="Schleich S."/>
            <person name="Schroeter R."/>
            <person name="Scoffone F."/>
            <person name="Sekiguchi J."/>
            <person name="Sekowska A."/>
            <person name="Seror S.J."/>
            <person name="Serror P."/>
            <person name="Shin B.-S."/>
            <person name="Soldo B."/>
            <person name="Sorokin A."/>
            <person name="Tacconi E."/>
            <person name="Takagi T."/>
            <person name="Takahashi H."/>
            <person name="Takemaru K."/>
            <person name="Takeuchi M."/>
            <person name="Tamakoshi A."/>
            <person name="Tanaka T."/>
            <person name="Terpstra P."/>
            <person name="Tognoni A."/>
            <person name="Tosato V."/>
            <person name="Uchiyama S."/>
            <person name="Vandenbol M."/>
            <person name="Vannier F."/>
            <person name="Vassarotti A."/>
            <person name="Viari A."/>
            <person name="Wambutt R."/>
            <person name="Wedler E."/>
            <person name="Wedler H."/>
            <person name="Weitzenegger T."/>
            <person name="Winters P."/>
            <person name="Wipat A."/>
            <person name="Yamamoto H."/>
            <person name="Yamane K."/>
            <person name="Yasumoto K."/>
            <person name="Yata K."/>
            <person name="Yoshida K."/>
            <person name="Yoshikawa H.-F."/>
            <person name="Zumstein E."/>
            <person name="Yoshikawa H."/>
            <person name="Danchin A."/>
        </authorList>
    </citation>
    <scope>NUCLEOTIDE SEQUENCE [LARGE SCALE GENOMIC DNA]</scope>
    <source>
        <strain>168</strain>
    </source>
</reference>
<reference key="3">
    <citation type="journal article" date="2009" name="Microbiology">
        <title>From a consortium sequence to a unified sequence: the Bacillus subtilis 168 reference genome a decade later.</title>
        <authorList>
            <person name="Barbe V."/>
            <person name="Cruveiller S."/>
            <person name="Kunst F."/>
            <person name="Lenoble P."/>
            <person name="Meurice G."/>
            <person name="Sekowska A."/>
            <person name="Vallenet D."/>
            <person name="Wang T."/>
            <person name="Moszer I."/>
            <person name="Medigue C."/>
            <person name="Danchin A."/>
        </authorList>
    </citation>
    <scope>SEQUENCE REVISION TO 162</scope>
</reference>
<reference key="4">
    <citation type="journal article" date="2018" name="J. Biol. Chem.">
        <title>Identification of a metabolic disposal route for the oncometabolite S-(2-succino)cysteine in Bacillus subtilis.</title>
        <authorList>
            <person name="Niehaus T.D."/>
            <person name="Folz J."/>
            <person name="McCarty D.R."/>
            <person name="Cooper A.J.L."/>
            <person name="Moraga Amador D."/>
            <person name="Fiehn O."/>
            <person name="Hanson A.D."/>
        </authorList>
    </citation>
    <scope>FUNCTION</scope>
    <scope>CATALYTIC ACTIVITY</scope>
    <scope>BIOPHYSICOCHEMICAL PROPERTIES</scope>
    <scope>PATHWAY</scope>
    <scope>DISRUPTION PHENOTYPE</scope>
    <source>
        <strain>168</strain>
    </source>
</reference>
<proteinExistence type="evidence at protein level"/>
<feature type="chain" id="PRO_0000050018" description="S-(2-succino)cysteine N-acetyltransferase">
    <location>
        <begin position="1"/>
        <end position="165"/>
    </location>
</feature>
<feature type="domain" description="N-acetyltransferase" evidence="1">
    <location>
        <begin position="3"/>
        <end position="162"/>
    </location>
</feature>
<feature type="sequence conflict" description="In Ref. 1; BAA08328." evidence="4" ref="1">
    <original>R</original>
    <variation>G</variation>
    <location>
        <position position="162"/>
    </location>
</feature>